<accession>Q255A1</accession>
<dbReference type="EC" id="5.6.1.7" evidence="1"/>
<dbReference type="EMBL" id="AP006861">
    <property type="protein sequence ID" value="BAE81137.1"/>
    <property type="molecule type" value="Genomic_DNA"/>
</dbReference>
<dbReference type="RefSeq" id="WP_011457917.1">
    <property type="nucleotide sequence ID" value="NC_007899.1"/>
</dbReference>
<dbReference type="SMR" id="Q255A1"/>
<dbReference type="STRING" id="264202.CF0365"/>
<dbReference type="KEGG" id="cfe:CF0365"/>
<dbReference type="eggNOG" id="COG0459">
    <property type="taxonomic scope" value="Bacteria"/>
</dbReference>
<dbReference type="HOGENOM" id="CLU_016503_3_0_0"/>
<dbReference type="OrthoDB" id="9766614at2"/>
<dbReference type="Proteomes" id="UP000001260">
    <property type="component" value="Chromosome"/>
</dbReference>
<dbReference type="GO" id="GO:0005737">
    <property type="term" value="C:cytoplasm"/>
    <property type="evidence" value="ECO:0007669"/>
    <property type="project" value="UniProtKB-SubCell"/>
</dbReference>
<dbReference type="GO" id="GO:0005524">
    <property type="term" value="F:ATP binding"/>
    <property type="evidence" value="ECO:0007669"/>
    <property type="project" value="UniProtKB-UniRule"/>
</dbReference>
<dbReference type="GO" id="GO:0140662">
    <property type="term" value="F:ATP-dependent protein folding chaperone"/>
    <property type="evidence" value="ECO:0007669"/>
    <property type="project" value="InterPro"/>
</dbReference>
<dbReference type="GO" id="GO:0016853">
    <property type="term" value="F:isomerase activity"/>
    <property type="evidence" value="ECO:0007669"/>
    <property type="project" value="UniProtKB-KW"/>
</dbReference>
<dbReference type="GO" id="GO:0051082">
    <property type="term" value="F:unfolded protein binding"/>
    <property type="evidence" value="ECO:0007669"/>
    <property type="project" value="UniProtKB-UniRule"/>
</dbReference>
<dbReference type="GO" id="GO:0042026">
    <property type="term" value="P:protein refolding"/>
    <property type="evidence" value="ECO:0007669"/>
    <property type="project" value="UniProtKB-UniRule"/>
</dbReference>
<dbReference type="CDD" id="cd03344">
    <property type="entry name" value="GroEL"/>
    <property type="match status" value="1"/>
</dbReference>
<dbReference type="FunFam" id="1.10.560.10:FF:000001">
    <property type="entry name" value="60 kDa chaperonin"/>
    <property type="match status" value="1"/>
</dbReference>
<dbReference type="FunFam" id="3.50.7.10:FF:000001">
    <property type="entry name" value="60 kDa chaperonin"/>
    <property type="match status" value="1"/>
</dbReference>
<dbReference type="Gene3D" id="3.50.7.10">
    <property type="entry name" value="GroEL"/>
    <property type="match status" value="1"/>
</dbReference>
<dbReference type="Gene3D" id="1.10.560.10">
    <property type="entry name" value="GroEL-like equatorial domain"/>
    <property type="match status" value="1"/>
</dbReference>
<dbReference type="Gene3D" id="3.30.260.10">
    <property type="entry name" value="TCP-1-like chaperonin intermediate domain"/>
    <property type="match status" value="1"/>
</dbReference>
<dbReference type="HAMAP" id="MF_00600">
    <property type="entry name" value="CH60"/>
    <property type="match status" value="1"/>
</dbReference>
<dbReference type="InterPro" id="IPR018370">
    <property type="entry name" value="Chaperonin_Cpn60_CS"/>
</dbReference>
<dbReference type="InterPro" id="IPR001844">
    <property type="entry name" value="Cpn60/GroEL"/>
</dbReference>
<dbReference type="InterPro" id="IPR002423">
    <property type="entry name" value="Cpn60/GroEL/TCP-1"/>
</dbReference>
<dbReference type="InterPro" id="IPR027409">
    <property type="entry name" value="GroEL-like_apical_dom_sf"/>
</dbReference>
<dbReference type="InterPro" id="IPR027413">
    <property type="entry name" value="GROEL-like_equatorial_sf"/>
</dbReference>
<dbReference type="InterPro" id="IPR027410">
    <property type="entry name" value="TCP-1-like_intermed_sf"/>
</dbReference>
<dbReference type="NCBIfam" id="TIGR02348">
    <property type="entry name" value="GroEL"/>
    <property type="match status" value="1"/>
</dbReference>
<dbReference type="NCBIfam" id="NF000592">
    <property type="entry name" value="PRK00013.1"/>
    <property type="match status" value="1"/>
</dbReference>
<dbReference type="NCBIfam" id="NF009487">
    <property type="entry name" value="PRK12849.1"/>
    <property type="match status" value="1"/>
</dbReference>
<dbReference type="NCBIfam" id="NF009488">
    <property type="entry name" value="PRK12850.1"/>
    <property type="match status" value="1"/>
</dbReference>
<dbReference type="NCBIfam" id="NF009489">
    <property type="entry name" value="PRK12851.1"/>
    <property type="match status" value="1"/>
</dbReference>
<dbReference type="PANTHER" id="PTHR45633">
    <property type="entry name" value="60 KDA HEAT SHOCK PROTEIN, MITOCHONDRIAL"/>
    <property type="match status" value="1"/>
</dbReference>
<dbReference type="Pfam" id="PF00118">
    <property type="entry name" value="Cpn60_TCP1"/>
    <property type="match status" value="1"/>
</dbReference>
<dbReference type="PRINTS" id="PR00298">
    <property type="entry name" value="CHAPERONIN60"/>
</dbReference>
<dbReference type="SUPFAM" id="SSF52029">
    <property type="entry name" value="GroEL apical domain-like"/>
    <property type="match status" value="1"/>
</dbReference>
<dbReference type="SUPFAM" id="SSF48592">
    <property type="entry name" value="GroEL equatorial domain-like"/>
    <property type="match status" value="1"/>
</dbReference>
<dbReference type="SUPFAM" id="SSF54849">
    <property type="entry name" value="GroEL-intermediate domain like"/>
    <property type="match status" value="1"/>
</dbReference>
<dbReference type="PROSITE" id="PS00296">
    <property type="entry name" value="CHAPERONINS_CPN60"/>
    <property type="match status" value="1"/>
</dbReference>
<proteinExistence type="inferred from homology"/>
<name>CH60_CHLFF</name>
<reference key="1">
    <citation type="journal article" date="2006" name="DNA Res.">
        <title>Genome sequence of the cat pathogen, Chlamydophila felis.</title>
        <authorList>
            <person name="Azuma Y."/>
            <person name="Hirakawa H."/>
            <person name="Yamashita A."/>
            <person name="Cai Y."/>
            <person name="Rahman M.A."/>
            <person name="Suzuki H."/>
            <person name="Mitaku S."/>
            <person name="Toh H."/>
            <person name="Goto S."/>
            <person name="Murakami T."/>
            <person name="Sugi K."/>
            <person name="Hayashi H."/>
            <person name="Fukushi H."/>
            <person name="Hattori M."/>
            <person name="Kuhara S."/>
            <person name="Shirai M."/>
        </authorList>
    </citation>
    <scope>NUCLEOTIDE SEQUENCE [LARGE SCALE GENOMIC DNA]</scope>
    <source>
        <strain>Fe/C-56</strain>
    </source>
</reference>
<protein>
    <recommendedName>
        <fullName evidence="1">Chaperonin GroEL</fullName>
        <ecNumber evidence="1">5.6.1.7</ecNumber>
    </recommendedName>
    <alternativeName>
        <fullName evidence="1">60 kDa chaperonin</fullName>
    </alternativeName>
    <alternativeName>
        <fullName evidence="1">Chaperonin-60</fullName>
        <shortName evidence="1">Cpn60</shortName>
    </alternativeName>
</protein>
<evidence type="ECO:0000255" key="1">
    <source>
        <dbReference type="HAMAP-Rule" id="MF_00600"/>
    </source>
</evidence>
<feature type="chain" id="PRO_0000256892" description="Chaperonin GroEL">
    <location>
        <begin position="1"/>
        <end position="544"/>
    </location>
</feature>
<feature type="binding site" evidence="1">
    <location>
        <begin position="30"/>
        <end position="33"/>
    </location>
    <ligand>
        <name>ATP</name>
        <dbReference type="ChEBI" id="CHEBI:30616"/>
    </ligand>
</feature>
<feature type="binding site" evidence="1">
    <location>
        <position position="51"/>
    </location>
    <ligand>
        <name>ATP</name>
        <dbReference type="ChEBI" id="CHEBI:30616"/>
    </ligand>
</feature>
<feature type="binding site" evidence="1">
    <location>
        <begin position="87"/>
        <end position="91"/>
    </location>
    <ligand>
        <name>ATP</name>
        <dbReference type="ChEBI" id="CHEBI:30616"/>
    </ligand>
</feature>
<feature type="binding site" evidence="1">
    <location>
        <position position="415"/>
    </location>
    <ligand>
        <name>ATP</name>
        <dbReference type="ChEBI" id="CHEBI:30616"/>
    </ligand>
</feature>
<feature type="binding site" evidence="1">
    <location>
        <begin position="481"/>
        <end position="483"/>
    </location>
    <ligand>
        <name>ATP</name>
        <dbReference type="ChEBI" id="CHEBI:30616"/>
    </ligand>
</feature>
<feature type="binding site" evidence="1">
    <location>
        <position position="497"/>
    </location>
    <ligand>
        <name>ATP</name>
        <dbReference type="ChEBI" id="CHEBI:30616"/>
    </ligand>
</feature>
<sequence>MAAKNIKYNEDARKKIHKGVKTLAEAVKVTLGPKGRHVVIDKSFGSPQVTKDGVTVAKEIELEDKHENMGAQMVKEVASKTADKAGDGTTTATVLAEAIYSEGLRNVTAGANPMDLKRGIDKAVKVVVDEIKKISKPVQHHKEIAQVATISANNDAEIGNLIAEAMEKVGKNGSITVEEAKGFETVLDVVEGMNFNRGYLSSYFTTNPETQECVLEESLVLIYDKKISGIKDFLPVLQQVAESGRPLLIIAEDIEGEALATLVVNRLRAGFRVCAVKAPGFGDRRKAMLEDIAILTGGQLISEELGMKLENTTLSMLGKAKKVIVSKEDTTIVEGLGNKEDIEARCENIKKQIEDSTSDYDKEKLQERLAKLSGGVAVIRVGAATEIEMKEKKDRVDDAQHATLAAVEEGILPGGGTALVRCIPTLEAFIPILTNEDEQIGARIVLKALSAPLKQIAANAGKEGAIICQQVLARSSNEGYDALRDAYTDMIEAGILDPTKVTRCALESAASVAGLLLTTEALIADIPEDKSSSAPAMPGAGMDY</sequence>
<gene>
    <name evidence="1" type="primary">groEL</name>
    <name evidence="1" type="synonym">groL</name>
    <name type="ordered locus">CF0365</name>
</gene>
<keyword id="KW-0067">ATP-binding</keyword>
<keyword id="KW-0143">Chaperone</keyword>
<keyword id="KW-0963">Cytoplasm</keyword>
<keyword id="KW-0413">Isomerase</keyword>
<keyword id="KW-0547">Nucleotide-binding</keyword>
<organism>
    <name type="scientific">Chlamydia felis (strain Fe/C-56)</name>
    <name type="common">Chlamydophila felis</name>
    <dbReference type="NCBI Taxonomy" id="264202"/>
    <lineage>
        <taxon>Bacteria</taxon>
        <taxon>Pseudomonadati</taxon>
        <taxon>Chlamydiota</taxon>
        <taxon>Chlamydiia</taxon>
        <taxon>Chlamydiales</taxon>
        <taxon>Chlamydiaceae</taxon>
        <taxon>Chlamydia/Chlamydophila group</taxon>
        <taxon>Chlamydia</taxon>
    </lineage>
</organism>
<comment type="function">
    <text evidence="1">Together with its co-chaperonin GroES, plays an essential role in assisting protein folding. The GroEL-GroES system forms a nano-cage that allows encapsulation of the non-native substrate proteins and provides a physical environment optimized to promote and accelerate protein folding.</text>
</comment>
<comment type="catalytic activity">
    <reaction evidence="1">
        <text>ATP + H2O + a folded polypeptide = ADP + phosphate + an unfolded polypeptide.</text>
        <dbReference type="EC" id="5.6.1.7"/>
    </reaction>
</comment>
<comment type="subunit">
    <text evidence="1">Forms a cylinder of 14 subunits composed of two heptameric rings stacked back-to-back. Interacts with the co-chaperonin GroES.</text>
</comment>
<comment type="subcellular location">
    <subcellularLocation>
        <location evidence="1">Cytoplasm</location>
    </subcellularLocation>
</comment>
<comment type="similarity">
    <text evidence="1">Belongs to the chaperonin (HSP60) family.</text>
</comment>